<sequence length="117" mass="12919">MEIKPSRIFSTITIFFLCLLLAHVTSKASSSSLCNGSVAECSSMVETEEMSVIMESWSSQRLTEEQAHKLSYGALRRNQPACDGGKRGESYSTQCLPPPSNPYSRGCSKHYRCGRDS</sequence>
<feature type="signal peptide" evidence="2">
    <location>
        <begin position="1"/>
        <end position="26"/>
    </location>
</feature>
<feature type="propeptide" id="PRO_0000420331" description="Removed in mature form" evidence="1">
    <location>
        <begin position="27"/>
        <end position="64"/>
    </location>
</feature>
<feature type="chain" id="PRO_0000420332" description="Protein RALF-like 32">
    <location>
        <begin position="65"/>
        <end position="117"/>
    </location>
</feature>
<feature type="region of interest" description="Disordered" evidence="3">
    <location>
        <begin position="77"/>
        <end position="107"/>
    </location>
</feature>
<feature type="site" description="Required for proteolytic cleavage" evidence="1">
    <location>
        <begin position="60"/>
        <end position="61"/>
    </location>
</feature>
<feature type="glycosylation site" description="N-linked (GlcNAc...) asparagine" evidence="2">
    <location>
        <position position="35"/>
    </location>
</feature>
<feature type="disulfide bond" evidence="1">
    <location>
        <begin position="82"/>
        <end position="95"/>
    </location>
</feature>
<feature type="disulfide bond" evidence="1">
    <location>
        <begin position="107"/>
        <end position="113"/>
    </location>
</feature>
<feature type="sequence conflict" description="In Ref. 5; AAM66043." evidence="4" ref="5">
    <original>C</original>
    <variation>F</variation>
    <location>
        <position position="113"/>
    </location>
</feature>
<gene>
    <name type="primary">RALFL32</name>
    <name type="ordered locus">At4g14010</name>
    <name type="ORF">dl3045c</name>
    <name type="ORF">FCAALL.140</name>
</gene>
<protein>
    <recommendedName>
        <fullName>Protein RALF-like 32</fullName>
    </recommendedName>
</protein>
<dbReference type="EMBL" id="Z97335">
    <property type="protein sequence ID" value="CAB10180.1"/>
    <property type="molecule type" value="Genomic_DNA"/>
</dbReference>
<dbReference type="EMBL" id="AL161537">
    <property type="protein sequence ID" value="CAB78443.1"/>
    <property type="molecule type" value="Genomic_DNA"/>
</dbReference>
<dbReference type="EMBL" id="CP002687">
    <property type="protein sequence ID" value="AEE83360.1"/>
    <property type="molecule type" value="Genomic_DNA"/>
</dbReference>
<dbReference type="EMBL" id="BT024787">
    <property type="protein sequence ID" value="ABD59125.1"/>
    <property type="molecule type" value="mRNA"/>
</dbReference>
<dbReference type="EMBL" id="AY088508">
    <property type="protein sequence ID" value="AAM66043.1"/>
    <property type="molecule type" value="mRNA"/>
</dbReference>
<dbReference type="EMBL" id="AK227441">
    <property type="protein sequence ID" value="BAE99444.1"/>
    <property type="molecule type" value="mRNA"/>
</dbReference>
<dbReference type="PIR" id="B71401">
    <property type="entry name" value="B71401"/>
</dbReference>
<dbReference type="RefSeq" id="NP_567418.1">
    <property type="nucleotide sequence ID" value="NM_117476.5"/>
</dbReference>
<dbReference type="FunCoup" id="O23262">
    <property type="interactions" value="186"/>
</dbReference>
<dbReference type="STRING" id="3702.O23262"/>
<dbReference type="GlyCosmos" id="O23262">
    <property type="glycosylation" value="1 site, No reported glycans"/>
</dbReference>
<dbReference type="GlyGen" id="O23262">
    <property type="glycosylation" value="1 site"/>
</dbReference>
<dbReference type="PaxDb" id="3702-AT4G14010.1"/>
<dbReference type="ProteomicsDB" id="228021"/>
<dbReference type="EnsemblPlants" id="AT4G14010.1">
    <property type="protein sequence ID" value="AT4G14010.1"/>
    <property type="gene ID" value="AT4G14010"/>
</dbReference>
<dbReference type="GeneID" id="827037"/>
<dbReference type="Gramene" id="AT4G14010.1">
    <property type="protein sequence ID" value="AT4G14010.1"/>
    <property type="gene ID" value="AT4G14010"/>
</dbReference>
<dbReference type="KEGG" id="ath:AT4G14010"/>
<dbReference type="Araport" id="AT4G14010"/>
<dbReference type="TAIR" id="AT4G14010">
    <property type="gene designation" value="RALFL32"/>
</dbReference>
<dbReference type="eggNOG" id="ENOG502S5DT">
    <property type="taxonomic scope" value="Eukaryota"/>
</dbReference>
<dbReference type="HOGENOM" id="CLU_127895_4_0_1"/>
<dbReference type="InParanoid" id="O23262"/>
<dbReference type="OMA" id="LFSFMHF"/>
<dbReference type="OrthoDB" id="1921542at2759"/>
<dbReference type="PhylomeDB" id="O23262"/>
<dbReference type="PRO" id="PR:O23262"/>
<dbReference type="Proteomes" id="UP000006548">
    <property type="component" value="Chromosome 4"/>
</dbReference>
<dbReference type="ExpressionAtlas" id="O23262">
    <property type="expression patterns" value="baseline and differential"/>
</dbReference>
<dbReference type="GO" id="GO:0048046">
    <property type="term" value="C:apoplast"/>
    <property type="evidence" value="ECO:0000250"/>
    <property type="project" value="TAIR"/>
</dbReference>
<dbReference type="GO" id="GO:0005179">
    <property type="term" value="F:hormone activity"/>
    <property type="evidence" value="ECO:0000250"/>
    <property type="project" value="UniProtKB"/>
</dbReference>
<dbReference type="GO" id="GO:0019722">
    <property type="term" value="P:calcium-mediated signaling"/>
    <property type="evidence" value="ECO:0000250"/>
    <property type="project" value="UniProtKB"/>
</dbReference>
<dbReference type="GO" id="GO:0007267">
    <property type="term" value="P:cell-cell signaling"/>
    <property type="evidence" value="ECO:0000250"/>
    <property type="project" value="TAIR"/>
</dbReference>
<dbReference type="GO" id="GO:0040008">
    <property type="term" value="P:regulation of growth"/>
    <property type="evidence" value="ECO:0007669"/>
    <property type="project" value="UniProtKB-ARBA"/>
</dbReference>
<dbReference type="InterPro" id="IPR008801">
    <property type="entry name" value="RALF"/>
</dbReference>
<dbReference type="PANTHER" id="PTHR33136:SF4">
    <property type="entry name" value="PROTEIN RALF-LIKE 32"/>
    <property type="match status" value="1"/>
</dbReference>
<dbReference type="PANTHER" id="PTHR33136">
    <property type="entry name" value="RAPID ALKALINIZATION FACTOR-LIKE"/>
    <property type="match status" value="1"/>
</dbReference>
<dbReference type="Pfam" id="PF05498">
    <property type="entry name" value="RALF"/>
    <property type="match status" value="1"/>
</dbReference>
<evidence type="ECO:0000250" key="1"/>
<evidence type="ECO:0000255" key="2"/>
<evidence type="ECO:0000256" key="3">
    <source>
        <dbReference type="SAM" id="MobiDB-lite"/>
    </source>
</evidence>
<evidence type="ECO:0000305" key="4"/>
<keyword id="KW-1015">Disulfide bond</keyword>
<keyword id="KW-0325">Glycoprotein</keyword>
<keyword id="KW-0372">Hormone</keyword>
<keyword id="KW-1185">Reference proteome</keyword>
<keyword id="KW-0964">Secreted</keyword>
<keyword id="KW-0732">Signal</keyword>
<accession>O23262</accession>
<accession>Q0WTV4</accession>
<accession>Q8L9C7</accession>
<comment type="function">
    <text evidence="1">Cell signaling peptide that may regulate plant stress, growth, and development. Mediates a rapid alkalinization of extracellular space by mediating a transient increase in the cytoplasmic Ca(2+) concentration leading to a calcium-dependent signaling events through a cell surface receptor and a concomitant activation of some intracellular mitogen-activated protein kinases (By similarity).</text>
</comment>
<comment type="subcellular location">
    <subcellularLocation>
        <location evidence="1">Secreted</location>
    </subcellularLocation>
</comment>
<comment type="PTM">
    <text evidence="1">Proteolytically cleaved, probably by S1P, a subtilisin-like serine protease (subtilase).</text>
</comment>
<comment type="similarity">
    <text evidence="4">Belongs to the plant rapid alkalinization factor (RALF) family.</text>
</comment>
<organism>
    <name type="scientific">Arabidopsis thaliana</name>
    <name type="common">Mouse-ear cress</name>
    <dbReference type="NCBI Taxonomy" id="3702"/>
    <lineage>
        <taxon>Eukaryota</taxon>
        <taxon>Viridiplantae</taxon>
        <taxon>Streptophyta</taxon>
        <taxon>Embryophyta</taxon>
        <taxon>Tracheophyta</taxon>
        <taxon>Spermatophyta</taxon>
        <taxon>Magnoliopsida</taxon>
        <taxon>eudicotyledons</taxon>
        <taxon>Gunneridae</taxon>
        <taxon>Pentapetalae</taxon>
        <taxon>rosids</taxon>
        <taxon>malvids</taxon>
        <taxon>Brassicales</taxon>
        <taxon>Brassicaceae</taxon>
        <taxon>Camelineae</taxon>
        <taxon>Arabidopsis</taxon>
    </lineage>
</organism>
<name>RLF32_ARATH</name>
<reference key="1">
    <citation type="journal article" date="1998" name="Nature">
        <title>Analysis of 1.9 Mb of contiguous sequence from chromosome 4 of Arabidopsis thaliana.</title>
        <authorList>
            <person name="Bevan M."/>
            <person name="Bancroft I."/>
            <person name="Bent E."/>
            <person name="Love K."/>
            <person name="Goodman H.M."/>
            <person name="Dean C."/>
            <person name="Bergkamp R."/>
            <person name="Dirkse W."/>
            <person name="van Staveren M."/>
            <person name="Stiekema W."/>
            <person name="Drost L."/>
            <person name="Ridley P."/>
            <person name="Hudson S.-A."/>
            <person name="Patel K."/>
            <person name="Murphy G."/>
            <person name="Piffanelli P."/>
            <person name="Wedler H."/>
            <person name="Wedler E."/>
            <person name="Wambutt R."/>
            <person name="Weitzenegger T."/>
            <person name="Pohl T."/>
            <person name="Terryn N."/>
            <person name="Gielen J."/>
            <person name="Villarroel R."/>
            <person name="De Clercq R."/>
            <person name="van Montagu M."/>
            <person name="Lecharny A."/>
            <person name="Aubourg S."/>
            <person name="Gy I."/>
            <person name="Kreis M."/>
            <person name="Lao N."/>
            <person name="Kavanagh T."/>
            <person name="Hempel S."/>
            <person name="Kotter P."/>
            <person name="Entian K.-D."/>
            <person name="Rieger M."/>
            <person name="Schaefer M."/>
            <person name="Funk B."/>
            <person name="Mueller-Auer S."/>
            <person name="Silvey M."/>
            <person name="James R."/>
            <person name="Monfort A."/>
            <person name="Pons A."/>
            <person name="Puigdomenech P."/>
            <person name="Douka A."/>
            <person name="Voukelatou E."/>
            <person name="Milioni D."/>
            <person name="Hatzopoulos P."/>
            <person name="Piravandi E."/>
            <person name="Obermaier B."/>
            <person name="Hilbert H."/>
            <person name="Duesterhoeft A."/>
            <person name="Moores T."/>
            <person name="Jones J.D.G."/>
            <person name="Eneva T."/>
            <person name="Palme K."/>
            <person name="Benes V."/>
            <person name="Rechmann S."/>
            <person name="Ansorge W."/>
            <person name="Cooke R."/>
            <person name="Berger C."/>
            <person name="Delseny M."/>
            <person name="Voet M."/>
            <person name="Volckaert G."/>
            <person name="Mewes H.-W."/>
            <person name="Klosterman S."/>
            <person name="Schueller C."/>
            <person name="Chalwatzis N."/>
        </authorList>
    </citation>
    <scope>NUCLEOTIDE SEQUENCE [LARGE SCALE GENOMIC DNA]</scope>
    <source>
        <strain>cv. Columbia</strain>
    </source>
</reference>
<reference key="2">
    <citation type="journal article" date="1999" name="Nature">
        <title>Sequence and analysis of chromosome 4 of the plant Arabidopsis thaliana.</title>
        <authorList>
            <person name="Mayer K.F.X."/>
            <person name="Schueller C."/>
            <person name="Wambutt R."/>
            <person name="Murphy G."/>
            <person name="Volckaert G."/>
            <person name="Pohl T."/>
            <person name="Duesterhoeft A."/>
            <person name="Stiekema W."/>
            <person name="Entian K.-D."/>
            <person name="Terryn N."/>
            <person name="Harris B."/>
            <person name="Ansorge W."/>
            <person name="Brandt P."/>
            <person name="Grivell L.A."/>
            <person name="Rieger M."/>
            <person name="Weichselgartner M."/>
            <person name="de Simone V."/>
            <person name="Obermaier B."/>
            <person name="Mache R."/>
            <person name="Mueller M."/>
            <person name="Kreis M."/>
            <person name="Delseny M."/>
            <person name="Puigdomenech P."/>
            <person name="Watson M."/>
            <person name="Schmidtheini T."/>
            <person name="Reichert B."/>
            <person name="Portetelle D."/>
            <person name="Perez-Alonso M."/>
            <person name="Boutry M."/>
            <person name="Bancroft I."/>
            <person name="Vos P."/>
            <person name="Hoheisel J."/>
            <person name="Zimmermann W."/>
            <person name="Wedler H."/>
            <person name="Ridley P."/>
            <person name="Langham S.-A."/>
            <person name="McCullagh B."/>
            <person name="Bilham L."/>
            <person name="Robben J."/>
            <person name="van der Schueren J."/>
            <person name="Grymonprez B."/>
            <person name="Chuang Y.-J."/>
            <person name="Vandenbussche F."/>
            <person name="Braeken M."/>
            <person name="Weltjens I."/>
            <person name="Voet M."/>
            <person name="Bastiaens I."/>
            <person name="Aert R."/>
            <person name="Defoor E."/>
            <person name="Weitzenegger T."/>
            <person name="Bothe G."/>
            <person name="Ramsperger U."/>
            <person name="Hilbert H."/>
            <person name="Braun M."/>
            <person name="Holzer E."/>
            <person name="Brandt A."/>
            <person name="Peters S."/>
            <person name="van Staveren M."/>
            <person name="Dirkse W."/>
            <person name="Mooijman P."/>
            <person name="Klein Lankhorst R."/>
            <person name="Rose M."/>
            <person name="Hauf J."/>
            <person name="Koetter P."/>
            <person name="Berneiser S."/>
            <person name="Hempel S."/>
            <person name="Feldpausch M."/>
            <person name="Lamberth S."/>
            <person name="Van den Daele H."/>
            <person name="De Keyser A."/>
            <person name="Buysshaert C."/>
            <person name="Gielen J."/>
            <person name="Villarroel R."/>
            <person name="De Clercq R."/>
            <person name="van Montagu M."/>
            <person name="Rogers J."/>
            <person name="Cronin A."/>
            <person name="Quail M.A."/>
            <person name="Bray-Allen S."/>
            <person name="Clark L."/>
            <person name="Doggett J."/>
            <person name="Hall S."/>
            <person name="Kay M."/>
            <person name="Lennard N."/>
            <person name="McLay K."/>
            <person name="Mayes R."/>
            <person name="Pettett A."/>
            <person name="Rajandream M.A."/>
            <person name="Lyne M."/>
            <person name="Benes V."/>
            <person name="Rechmann S."/>
            <person name="Borkova D."/>
            <person name="Bloecker H."/>
            <person name="Scharfe M."/>
            <person name="Grimm M."/>
            <person name="Loehnert T.-H."/>
            <person name="Dose S."/>
            <person name="de Haan M."/>
            <person name="Maarse A.C."/>
            <person name="Schaefer M."/>
            <person name="Mueller-Auer S."/>
            <person name="Gabel C."/>
            <person name="Fuchs M."/>
            <person name="Fartmann B."/>
            <person name="Granderath K."/>
            <person name="Dauner D."/>
            <person name="Herzl A."/>
            <person name="Neumann S."/>
            <person name="Argiriou A."/>
            <person name="Vitale D."/>
            <person name="Liguori R."/>
            <person name="Piravandi E."/>
            <person name="Massenet O."/>
            <person name="Quigley F."/>
            <person name="Clabauld G."/>
            <person name="Muendlein A."/>
            <person name="Felber R."/>
            <person name="Schnabl S."/>
            <person name="Hiller R."/>
            <person name="Schmidt W."/>
            <person name="Lecharny A."/>
            <person name="Aubourg S."/>
            <person name="Chefdor F."/>
            <person name="Cooke R."/>
            <person name="Berger C."/>
            <person name="Monfort A."/>
            <person name="Casacuberta E."/>
            <person name="Gibbons T."/>
            <person name="Weber N."/>
            <person name="Vandenbol M."/>
            <person name="Bargues M."/>
            <person name="Terol J."/>
            <person name="Torres A."/>
            <person name="Perez-Perez A."/>
            <person name="Purnelle B."/>
            <person name="Bent E."/>
            <person name="Johnson S."/>
            <person name="Tacon D."/>
            <person name="Jesse T."/>
            <person name="Heijnen L."/>
            <person name="Schwarz S."/>
            <person name="Scholler P."/>
            <person name="Heber S."/>
            <person name="Francs P."/>
            <person name="Bielke C."/>
            <person name="Frishman D."/>
            <person name="Haase D."/>
            <person name="Lemcke K."/>
            <person name="Mewes H.-W."/>
            <person name="Stocker S."/>
            <person name="Zaccaria P."/>
            <person name="Bevan M."/>
            <person name="Wilson R.K."/>
            <person name="de la Bastide M."/>
            <person name="Habermann K."/>
            <person name="Parnell L."/>
            <person name="Dedhia N."/>
            <person name="Gnoj L."/>
            <person name="Schutz K."/>
            <person name="Huang E."/>
            <person name="Spiegel L."/>
            <person name="Sekhon M."/>
            <person name="Murray J."/>
            <person name="Sheet P."/>
            <person name="Cordes M."/>
            <person name="Abu-Threideh J."/>
            <person name="Stoneking T."/>
            <person name="Kalicki J."/>
            <person name="Graves T."/>
            <person name="Harmon G."/>
            <person name="Edwards J."/>
            <person name="Latreille P."/>
            <person name="Courtney L."/>
            <person name="Cloud J."/>
            <person name="Abbott A."/>
            <person name="Scott K."/>
            <person name="Johnson D."/>
            <person name="Minx P."/>
            <person name="Bentley D."/>
            <person name="Fulton B."/>
            <person name="Miller N."/>
            <person name="Greco T."/>
            <person name="Kemp K."/>
            <person name="Kramer J."/>
            <person name="Fulton L."/>
            <person name="Mardis E."/>
            <person name="Dante M."/>
            <person name="Pepin K."/>
            <person name="Hillier L.W."/>
            <person name="Nelson J."/>
            <person name="Spieth J."/>
            <person name="Ryan E."/>
            <person name="Andrews S."/>
            <person name="Geisel C."/>
            <person name="Layman D."/>
            <person name="Du H."/>
            <person name="Ali J."/>
            <person name="Berghoff A."/>
            <person name="Jones K."/>
            <person name="Drone K."/>
            <person name="Cotton M."/>
            <person name="Joshu C."/>
            <person name="Antonoiu B."/>
            <person name="Zidanic M."/>
            <person name="Strong C."/>
            <person name="Sun H."/>
            <person name="Lamar B."/>
            <person name="Yordan C."/>
            <person name="Ma P."/>
            <person name="Zhong J."/>
            <person name="Preston R."/>
            <person name="Vil D."/>
            <person name="Shekher M."/>
            <person name="Matero A."/>
            <person name="Shah R."/>
            <person name="Swaby I.K."/>
            <person name="O'Shaughnessy A."/>
            <person name="Rodriguez M."/>
            <person name="Hoffman J."/>
            <person name="Till S."/>
            <person name="Granat S."/>
            <person name="Shohdy N."/>
            <person name="Hasegawa A."/>
            <person name="Hameed A."/>
            <person name="Lodhi M."/>
            <person name="Johnson A."/>
            <person name="Chen E."/>
            <person name="Marra M.A."/>
            <person name="Martienssen R."/>
            <person name="McCombie W.R."/>
        </authorList>
    </citation>
    <scope>NUCLEOTIDE SEQUENCE [LARGE SCALE GENOMIC DNA]</scope>
    <source>
        <strain>cv. Columbia</strain>
    </source>
</reference>
<reference key="3">
    <citation type="journal article" date="2017" name="Plant J.">
        <title>Araport11: a complete reannotation of the Arabidopsis thaliana reference genome.</title>
        <authorList>
            <person name="Cheng C.Y."/>
            <person name="Krishnakumar V."/>
            <person name="Chan A.P."/>
            <person name="Thibaud-Nissen F."/>
            <person name="Schobel S."/>
            <person name="Town C.D."/>
        </authorList>
    </citation>
    <scope>GENOME REANNOTATION</scope>
    <source>
        <strain>cv. Columbia</strain>
    </source>
</reference>
<reference key="4">
    <citation type="submission" date="2006-03" db="EMBL/GenBank/DDBJ databases">
        <title>Arabidopsis ORF clones.</title>
        <authorList>
            <person name="Kim C.J."/>
            <person name="Chen H."/>
            <person name="Shinn P."/>
            <person name="Ecker J.R."/>
        </authorList>
    </citation>
    <scope>NUCLEOTIDE SEQUENCE [LARGE SCALE MRNA]</scope>
    <source>
        <strain>cv. Columbia</strain>
    </source>
</reference>
<reference key="5">
    <citation type="submission" date="2002-03" db="EMBL/GenBank/DDBJ databases">
        <title>Full-length cDNA from Arabidopsis thaliana.</title>
        <authorList>
            <person name="Brover V.V."/>
            <person name="Troukhan M.E."/>
            <person name="Alexandrov N.A."/>
            <person name="Lu Y.-P."/>
            <person name="Flavell R.B."/>
            <person name="Feldmann K.A."/>
        </authorList>
    </citation>
    <scope>NUCLEOTIDE SEQUENCE [LARGE SCALE MRNA]</scope>
</reference>
<reference key="6">
    <citation type="submission" date="2006-07" db="EMBL/GenBank/DDBJ databases">
        <title>Large-scale analysis of RIKEN Arabidopsis full-length (RAFL) cDNAs.</title>
        <authorList>
            <person name="Totoki Y."/>
            <person name="Seki M."/>
            <person name="Ishida J."/>
            <person name="Nakajima M."/>
            <person name="Enju A."/>
            <person name="Kamiya A."/>
            <person name="Narusaka M."/>
            <person name="Shin-i T."/>
            <person name="Nakagawa M."/>
            <person name="Sakamoto N."/>
            <person name="Oishi K."/>
            <person name="Kohara Y."/>
            <person name="Kobayashi M."/>
            <person name="Toyoda A."/>
            <person name="Sakaki Y."/>
            <person name="Sakurai T."/>
            <person name="Iida K."/>
            <person name="Akiyama K."/>
            <person name="Satou M."/>
            <person name="Toyoda T."/>
            <person name="Konagaya A."/>
            <person name="Carninci P."/>
            <person name="Kawai J."/>
            <person name="Hayashizaki Y."/>
            <person name="Shinozaki K."/>
        </authorList>
    </citation>
    <scope>NUCLEOTIDE SEQUENCE [LARGE SCALE MRNA] OF 13-117</scope>
    <source>
        <strain>cv. Columbia</strain>
    </source>
</reference>
<reference key="7">
    <citation type="journal article" date="2002" name="In Silico Biol.">
        <title>Peptomics, identification of novel cationic Arabidopsis peptides with conserved sequence motifs.</title>
        <authorList>
            <person name="Olsen A.N."/>
            <person name="Mundy J."/>
            <person name="Skriver K."/>
        </authorList>
    </citation>
    <scope>GENE FAMILY</scope>
    <scope>NOMENCLATURE</scope>
</reference>
<proteinExistence type="inferred from homology"/>